<feature type="initiator methionine" description="Removed" evidence="1">
    <location>
        <position position="1"/>
    </location>
</feature>
<feature type="chain" id="PRO_0000075036" description="F420-dependent methylenetetrahydromethanopterin dehydrogenase">
    <location>
        <begin position="2"/>
        <end position="273"/>
    </location>
</feature>
<keyword id="KW-0903">Direct protein sequencing</keyword>
<keyword id="KW-0554">One-carbon metabolism</keyword>
<keyword id="KW-0560">Oxidoreductase</keyword>
<keyword id="KW-1185">Reference proteome</keyword>
<evidence type="ECO:0000269" key="1">
    <source>
    </source>
</evidence>
<evidence type="ECO:0000305" key="2"/>
<comment type="function">
    <text>Catalyzes the oxidation of methylene-H(4)MPT to methenyl-H(4)MPT(+).</text>
</comment>
<comment type="catalytic activity">
    <reaction>
        <text>5,10-methylenetetrahydromethanopterin + oxidized coenzyme F420-(gamma-L-Glu)(n) + 2 H(+) = 5,10-methenyl-5,6,7,8-tetrahydromethanopterin + reduced coenzyme F420-(gamma-L-Glu)(n)</text>
        <dbReference type="Rhea" id="RHEA:16721"/>
        <dbReference type="Rhea" id="RHEA-COMP:12939"/>
        <dbReference type="Rhea" id="RHEA-COMP:14378"/>
        <dbReference type="ChEBI" id="CHEBI:15378"/>
        <dbReference type="ChEBI" id="CHEBI:57818"/>
        <dbReference type="ChEBI" id="CHEBI:58337"/>
        <dbReference type="ChEBI" id="CHEBI:133980"/>
        <dbReference type="ChEBI" id="CHEBI:139511"/>
        <dbReference type="EC" id="1.5.98.1"/>
    </reaction>
</comment>
<comment type="biophysicochemical properties">
    <phDependence>
        <text>Optimum pH is about 5.5.</text>
    </phDependence>
    <temperatureDependence>
        <text>Optimum temperature is 70 degrees Celsius. Thermostable up to 90 degrees Celsius, however, only in the presence of salts.</text>
    </temperatureDependence>
</comment>
<comment type="pathway">
    <text>Metabolic intermediate metabolism; lactate oxidation.</text>
</comment>
<comment type="similarity">
    <text evidence="2">Belongs to the MTD family.</text>
</comment>
<proteinExistence type="evidence at protein level"/>
<gene>
    <name type="primary">mtd</name>
    <name type="ordered locus">AF_0714</name>
</gene>
<accession>O29544</accession>
<accession>Q9UWM0</accession>
<sequence length="273" mass="29645">MVVKVGVLKMGAIGTALLVEYLLDERADREDIEVRVVTSGAKMQPEEAVVAEKLKEFDPDVVIVVSPNAALPGPKAAREAFEGKPVIVISDAPAKKAKDELKEKGFGYILINADSMIGARREFLDPTEMALFNADVVKVLAATGAFRLVQEAIDKVIEDIKAGKQPELPQIVVTAEKAVEAGKFSNPYAKAKAMAAFYIAEKVADIDVKGCFIEKDPEKYIPLVASAHEMMRIAAILADQAREIEKSNDTVFRNPHAKDGKILGKTQLMAKPE</sequence>
<name>MTD_ARCFU</name>
<organism>
    <name type="scientific">Archaeoglobus fulgidus (strain ATCC 49558 / DSM 4304 / JCM 9628 / NBRC 100126 / VC-16)</name>
    <dbReference type="NCBI Taxonomy" id="224325"/>
    <lineage>
        <taxon>Archaea</taxon>
        <taxon>Methanobacteriati</taxon>
        <taxon>Methanobacteriota</taxon>
        <taxon>Archaeoglobi</taxon>
        <taxon>Archaeoglobales</taxon>
        <taxon>Archaeoglobaceae</taxon>
        <taxon>Archaeoglobus</taxon>
    </lineage>
</organism>
<protein>
    <recommendedName>
        <fullName>F420-dependent methylenetetrahydromethanopterin dehydrogenase</fullName>
        <shortName>MTD</shortName>
        <ecNumber>1.5.98.1</ecNumber>
    </recommendedName>
    <alternativeName>
        <fullName>Coenzyme F420-dependent N5,N10-methylenetetrahydromethanopterin dehydrogenase</fullName>
    </alternativeName>
</protein>
<reference key="1">
    <citation type="journal article" date="1997" name="Nature">
        <title>The complete genome sequence of the hyperthermophilic, sulphate-reducing archaeon Archaeoglobus fulgidus.</title>
        <authorList>
            <person name="Klenk H.-P."/>
            <person name="Clayton R.A."/>
            <person name="Tomb J.-F."/>
            <person name="White O."/>
            <person name="Nelson K.E."/>
            <person name="Ketchum K.A."/>
            <person name="Dodson R.J."/>
            <person name="Gwinn M.L."/>
            <person name="Hickey E.K."/>
            <person name="Peterson J.D."/>
            <person name="Richardson D.L."/>
            <person name="Kerlavage A.R."/>
            <person name="Graham D.E."/>
            <person name="Kyrpides N.C."/>
            <person name="Fleischmann R.D."/>
            <person name="Quackenbush J."/>
            <person name="Lee N.H."/>
            <person name="Sutton G.G."/>
            <person name="Gill S.R."/>
            <person name="Kirkness E.F."/>
            <person name="Dougherty B.A."/>
            <person name="McKenney K."/>
            <person name="Adams M.D."/>
            <person name="Loftus B.J."/>
            <person name="Peterson S.N."/>
            <person name="Reich C.I."/>
            <person name="McNeil L.K."/>
            <person name="Badger J.H."/>
            <person name="Glodek A."/>
            <person name="Zhou L."/>
            <person name="Overbeek R."/>
            <person name="Gocayne J.D."/>
            <person name="Weidman J.F."/>
            <person name="McDonald L.A."/>
            <person name="Utterback T.R."/>
            <person name="Cotton M.D."/>
            <person name="Spriggs T."/>
            <person name="Artiach P."/>
            <person name="Kaine B.P."/>
            <person name="Sykes S.M."/>
            <person name="Sadow P.W."/>
            <person name="D'Andrea K.P."/>
            <person name="Bowman C."/>
            <person name="Fujii C."/>
            <person name="Garland S.A."/>
            <person name="Mason T.M."/>
            <person name="Olsen G.J."/>
            <person name="Fraser C.M."/>
            <person name="Smith H.O."/>
            <person name="Woese C.R."/>
            <person name="Venter J.C."/>
        </authorList>
    </citation>
    <scope>NUCLEOTIDE SEQUENCE [LARGE SCALE GENOMIC DNA]</scope>
    <source>
        <strain>ATCC 49558 / DSM 4304 / JCM 9628 / NBRC 100126 / VC-16</strain>
    </source>
</reference>
<reference key="2">
    <citation type="journal article" date="1993" name="Arch. Microbiol.">
        <title>Formylmethanofuran: tetrahydromethanopterin formyltransferase and N5,N10-methylenetetrahydromethanopterin dehydrogenase from the sulfate-reducing Archaeoglobus fulgidus: similarities with the enzymes from methanogenic Archaea.</title>
        <authorList>
            <person name="Schworer B."/>
            <person name="Breitung J."/>
            <person name="Klein A.R."/>
            <person name="Stetter K.O."/>
            <person name="Thauer R.K."/>
        </authorList>
    </citation>
    <scope>PROTEIN SEQUENCE OF 2-34</scope>
    <scope>CHARACTERIZATION</scope>
    <source>
        <strain>ATCC 49558 / DSM 4304 / JCM 9628 / NBRC 100126 / VC-16</strain>
    </source>
</reference>
<dbReference type="EC" id="1.5.98.1"/>
<dbReference type="EMBL" id="AE000782">
    <property type="protein sequence ID" value="AAB90526.1"/>
    <property type="molecule type" value="Genomic_DNA"/>
</dbReference>
<dbReference type="PIR" id="B69339">
    <property type="entry name" value="B69339"/>
</dbReference>
<dbReference type="RefSeq" id="WP_010878217.1">
    <property type="nucleotide sequence ID" value="NC_000917.1"/>
</dbReference>
<dbReference type="SMR" id="O29544"/>
<dbReference type="STRING" id="224325.AF_0714"/>
<dbReference type="PaxDb" id="224325-AF_0714"/>
<dbReference type="EnsemblBacteria" id="AAB90526">
    <property type="protein sequence ID" value="AAB90526"/>
    <property type="gene ID" value="AF_0714"/>
</dbReference>
<dbReference type="KEGG" id="afu:AF_0714"/>
<dbReference type="eggNOG" id="arCOG04382">
    <property type="taxonomic scope" value="Archaea"/>
</dbReference>
<dbReference type="HOGENOM" id="CLU_1006890_0_0_2"/>
<dbReference type="OrthoDB" id="49844at2157"/>
<dbReference type="PhylomeDB" id="O29544"/>
<dbReference type="BioCyc" id="MetaCyc:AF_RS03625-MONOMER"/>
<dbReference type="UniPathway" id="UPA00701"/>
<dbReference type="Proteomes" id="UP000002199">
    <property type="component" value="Chromosome"/>
</dbReference>
<dbReference type="GO" id="GO:0008901">
    <property type="term" value="F:ferredoxin hydrogenase activity"/>
    <property type="evidence" value="ECO:0007669"/>
    <property type="project" value="InterPro"/>
</dbReference>
<dbReference type="GO" id="GO:0030268">
    <property type="term" value="F:methylenetetrahydromethanopterin dehydrogenase activity"/>
    <property type="evidence" value="ECO:0007669"/>
    <property type="project" value="UniProtKB-UniRule"/>
</dbReference>
<dbReference type="GO" id="GO:0006089">
    <property type="term" value="P:lactate metabolic process"/>
    <property type="evidence" value="ECO:0007669"/>
    <property type="project" value="UniProtKB-UniRule"/>
</dbReference>
<dbReference type="GO" id="GO:0015948">
    <property type="term" value="P:methanogenesis"/>
    <property type="evidence" value="ECO:0007669"/>
    <property type="project" value="InterPro"/>
</dbReference>
<dbReference type="GO" id="GO:0006730">
    <property type="term" value="P:one-carbon metabolic process"/>
    <property type="evidence" value="ECO:0007669"/>
    <property type="project" value="UniProtKB-UniRule"/>
</dbReference>
<dbReference type="Gene3D" id="6.10.140.120">
    <property type="match status" value="1"/>
</dbReference>
<dbReference type="Gene3D" id="3.40.50.10830">
    <property type="entry name" value="F420-dependent methylenetetrahydromethanopterin dehydrogenase (MTD)"/>
    <property type="match status" value="1"/>
</dbReference>
<dbReference type="HAMAP" id="MF_00058">
    <property type="entry name" value="MTD"/>
    <property type="match status" value="1"/>
</dbReference>
<dbReference type="InterPro" id="IPR002844">
    <property type="entry name" value="MTD"/>
</dbReference>
<dbReference type="InterPro" id="IPR036080">
    <property type="entry name" value="MTD_sf"/>
</dbReference>
<dbReference type="NCBIfam" id="NF002162">
    <property type="entry name" value="PRK00994.1"/>
    <property type="match status" value="1"/>
</dbReference>
<dbReference type="Pfam" id="PF01993">
    <property type="entry name" value="MTD"/>
    <property type="match status" value="1"/>
</dbReference>
<dbReference type="PIRSF" id="PIRSF005627">
    <property type="entry name" value="MTD"/>
    <property type="match status" value="1"/>
</dbReference>
<dbReference type="SUPFAM" id="SSF102324">
    <property type="entry name" value="F420-dependent methylenetetrahydromethanopterin dehydrogenase (MTD)"/>
    <property type="match status" value="1"/>
</dbReference>